<feature type="chain" id="PRO_0000109773" description="Delta-1-pyrroline-5-carboxylate synthase B">
    <location>
        <begin position="1"/>
        <end position="726"/>
    </location>
</feature>
<feature type="region of interest" description="Glutamate 5-kinase">
    <location>
        <begin position="1"/>
        <end position="296"/>
    </location>
</feature>
<feature type="region of interest" description="Gamma-glutamyl phosphate reductase">
    <location>
        <begin position="297"/>
        <end position="717"/>
    </location>
</feature>
<feature type="binding site" evidence="1">
    <location>
        <position position="60"/>
    </location>
    <ligand>
        <name>substrate</name>
    </ligand>
</feature>
<feature type="binding site" evidence="1">
    <location>
        <position position="157"/>
    </location>
    <ligand>
        <name>substrate</name>
    </ligand>
</feature>
<feature type="binding site" evidence="1">
    <location>
        <position position="176"/>
    </location>
    <ligand>
        <name>substrate</name>
    </ligand>
</feature>
<feature type="binding site" evidence="1">
    <location>
        <begin position="196"/>
        <end position="197"/>
    </location>
    <ligand>
        <name>ATP</name>
        <dbReference type="ChEBI" id="CHEBI:30616"/>
    </ligand>
</feature>
<feature type="binding site" evidence="1">
    <location>
        <begin position="236"/>
        <end position="242"/>
    </location>
    <ligand>
        <name>ATP</name>
        <dbReference type="ChEBI" id="CHEBI:30616"/>
    </ligand>
</feature>
<feature type="helix" evidence="3">
    <location>
        <begin position="6"/>
        <end position="12"/>
    </location>
</feature>
<feature type="strand" evidence="3">
    <location>
        <begin position="16"/>
        <end position="21"/>
    </location>
</feature>
<feature type="helix" evidence="3">
    <location>
        <begin position="23"/>
        <end position="26"/>
    </location>
</feature>
<feature type="helix" evidence="3">
    <location>
        <begin position="29"/>
        <end position="31"/>
    </location>
</feature>
<feature type="helix" evidence="3">
    <location>
        <begin position="35"/>
        <end position="50"/>
    </location>
</feature>
<feature type="strand" evidence="3">
    <location>
        <begin position="54"/>
        <end position="58"/>
    </location>
</feature>
<feature type="helix" evidence="3">
    <location>
        <begin position="62"/>
        <end position="77"/>
    </location>
</feature>
<feature type="helix" evidence="3">
    <location>
        <begin position="80"/>
        <end position="82"/>
    </location>
</feature>
<feature type="strand" evidence="3">
    <location>
        <begin position="83"/>
        <end position="85"/>
    </location>
</feature>
<feature type="helix" evidence="3">
    <location>
        <begin position="92"/>
        <end position="113"/>
    </location>
</feature>
<feature type="strand" evidence="3">
    <location>
        <begin position="117"/>
        <end position="123"/>
    </location>
</feature>
<feature type="helix" evidence="3">
    <location>
        <begin position="125"/>
        <end position="129"/>
    </location>
</feature>
<feature type="helix" evidence="3">
    <location>
        <begin position="131"/>
        <end position="146"/>
    </location>
</feature>
<feature type="strand" evidence="3">
    <location>
        <begin position="149"/>
        <end position="155"/>
    </location>
</feature>
<feature type="helix" evidence="3">
    <location>
        <begin position="176"/>
        <end position="186"/>
    </location>
</feature>
<feature type="strand" evidence="3">
    <location>
        <begin position="190"/>
        <end position="200"/>
    </location>
</feature>
<feature type="strand" evidence="3">
    <location>
        <begin position="202"/>
        <end position="204"/>
    </location>
</feature>
<feature type="strand" evidence="3">
    <location>
        <begin position="206"/>
        <end position="208"/>
    </location>
</feature>
<feature type="turn" evidence="3">
    <location>
        <begin position="219"/>
        <end position="225"/>
    </location>
</feature>
<feature type="helix" evidence="3">
    <location>
        <begin position="238"/>
        <end position="252"/>
    </location>
</feature>
<feature type="strand" evidence="3">
    <location>
        <begin position="256"/>
        <end position="260"/>
    </location>
</feature>
<feature type="helix" evidence="3">
    <location>
        <begin position="265"/>
        <end position="271"/>
    </location>
</feature>
<feature type="strand" evidence="3">
    <location>
        <begin position="277"/>
        <end position="280"/>
    </location>
</feature>
<feature type="helix" evidence="3">
    <location>
        <begin position="282"/>
        <end position="285"/>
    </location>
</feature>
<evidence type="ECO:0000250" key="1"/>
<evidence type="ECO:0000305" key="2"/>
<evidence type="ECO:0007829" key="3">
    <source>
        <dbReference type="PDB" id="8J0F"/>
    </source>
</evidence>
<reference key="1">
    <citation type="journal article" date="1997" name="Plant J.">
        <title>Differential expression of two P5CS genes controlling proline accumulation during salt-stress requires ABA and is regulated by ABA1, ABI1 and AXR2 in Arabidopsis.</title>
        <authorList>
            <person name="Strizhov N."/>
            <person name="Abraham E."/>
            <person name="Oekresz L."/>
            <person name="Blickling S."/>
            <person name="Zilberstein A."/>
            <person name="Schell J."/>
            <person name="Koncz C."/>
            <person name="Szabados L."/>
        </authorList>
    </citation>
    <scope>NUCLEOTIDE SEQUENCE [GENOMIC DNA / MRNA]</scope>
    <source>
        <strain>cv. Columbia</strain>
    </source>
</reference>
<reference key="2">
    <citation type="journal article" date="2000" name="Nature">
        <title>Sequence and analysis of chromosome 3 of the plant Arabidopsis thaliana.</title>
        <authorList>
            <person name="Salanoubat M."/>
            <person name="Lemcke K."/>
            <person name="Rieger M."/>
            <person name="Ansorge W."/>
            <person name="Unseld M."/>
            <person name="Fartmann B."/>
            <person name="Valle G."/>
            <person name="Bloecker H."/>
            <person name="Perez-Alonso M."/>
            <person name="Obermaier B."/>
            <person name="Delseny M."/>
            <person name="Boutry M."/>
            <person name="Grivell L.A."/>
            <person name="Mache R."/>
            <person name="Puigdomenech P."/>
            <person name="De Simone V."/>
            <person name="Choisne N."/>
            <person name="Artiguenave F."/>
            <person name="Robert C."/>
            <person name="Brottier P."/>
            <person name="Wincker P."/>
            <person name="Cattolico L."/>
            <person name="Weissenbach J."/>
            <person name="Saurin W."/>
            <person name="Quetier F."/>
            <person name="Schaefer M."/>
            <person name="Mueller-Auer S."/>
            <person name="Gabel C."/>
            <person name="Fuchs M."/>
            <person name="Benes V."/>
            <person name="Wurmbach E."/>
            <person name="Drzonek H."/>
            <person name="Erfle H."/>
            <person name="Jordan N."/>
            <person name="Bangert S."/>
            <person name="Wiedelmann R."/>
            <person name="Kranz H."/>
            <person name="Voss H."/>
            <person name="Holland R."/>
            <person name="Brandt P."/>
            <person name="Nyakatura G."/>
            <person name="Vezzi A."/>
            <person name="D'Angelo M."/>
            <person name="Pallavicini A."/>
            <person name="Toppo S."/>
            <person name="Simionati B."/>
            <person name="Conrad A."/>
            <person name="Hornischer K."/>
            <person name="Kauer G."/>
            <person name="Loehnert T.-H."/>
            <person name="Nordsiek G."/>
            <person name="Reichelt J."/>
            <person name="Scharfe M."/>
            <person name="Schoen O."/>
            <person name="Bargues M."/>
            <person name="Terol J."/>
            <person name="Climent J."/>
            <person name="Navarro P."/>
            <person name="Collado C."/>
            <person name="Perez-Perez A."/>
            <person name="Ottenwaelder B."/>
            <person name="Duchemin D."/>
            <person name="Cooke R."/>
            <person name="Laudie M."/>
            <person name="Berger-Llauro C."/>
            <person name="Purnelle B."/>
            <person name="Masuy D."/>
            <person name="de Haan M."/>
            <person name="Maarse A.C."/>
            <person name="Alcaraz J.-P."/>
            <person name="Cottet A."/>
            <person name="Casacuberta E."/>
            <person name="Monfort A."/>
            <person name="Argiriou A."/>
            <person name="Flores M."/>
            <person name="Liguori R."/>
            <person name="Vitale D."/>
            <person name="Mannhaupt G."/>
            <person name="Haase D."/>
            <person name="Schoof H."/>
            <person name="Rudd S."/>
            <person name="Zaccaria P."/>
            <person name="Mewes H.-W."/>
            <person name="Mayer K.F.X."/>
            <person name="Kaul S."/>
            <person name="Town C.D."/>
            <person name="Koo H.L."/>
            <person name="Tallon L.J."/>
            <person name="Jenkins J."/>
            <person name="Rooney T."/>
            <person name="Rizzo M."/>
            <person name="Walts A."/>
            <person name="Utterback T."/>
            <person name="Fujii C.Y."/>
            <person name="Shea T.P."/>
            <person name="Creasy T.H."/>
            <person name="Haas B."/>
            <person name="Maiti R."/>
            <person name="Wu D."/>
            <person name="Peterson J."/>
            <person name="Van Aken S."/>
            <person name="Pai G."/>
            <person name="Militscher J."/>
            <person name="Sellers P."/>
            <person name="Gill J.E."/>
            <person name="Feldblyum T.V."/>
            <person name="Preuss D."/>
            <person name="Lin X."/>
            <person name="Nierman W.C."/>
            <person name="Salzberg S.L."/>
            <person name="White O."/>
            <person name="Venter J.C."/>
            <person name="Fraser C.M."/>
            <person name="Kaneko T."/>
            <person name="Nakamura Y."/>
            <person name="Sato S."/>
            <person name="Kato T."/>
            <person name="Asamizu E."/>
            <person name="Sasamoto S."/>
            <person name="Kimura T."/>
            <person name="Idesawa K."/>
            <person name="Kawashima K."/>
            <person name="Kishida Y."/>
            <person name="Kiyokawa C."/>
            <person name="Kohara M."/>
            <person name="Matsumoto M."/>
            <person name="Matsuno A."/>
            <person name="Muraki A."/>
            <person name="Nakayama S."/>
            <person name="Nakazaki N."/>
            <person name="Shinpo S."/>
            <person name="Takeuchi C."/>
            <person name="Wada T."/>
            <person name="Watanabe A."/>
            <person name="Yamada M."/>
            <person name="Yasuda M."/>
            <person name="Tabata S."/>
        </authorList>
    </citation>
    <scope>NUCLEOTIDE SEQUENCE [LARGE SCALE GENOMIC DNA]</scope>
    <source>
        <strain>cv. Columbia</strain>
    </source>
</reference>
<reference key="3">
    <citation type="journal article" date="2017" name="Plant J.">
        <title>Araport11: a complete reannotation of the Arabidopsis thaliana reference genome.</title>
        <authorList>
            <person name="Cheng C.Y."/>
            <person name="Krishnakumar V."/>
            <person name="Chan A.P."/>
            <person name="Thibaud-Nissen F."/>
            <person name="Schobel S."/>
            <person name="Town C.D."/>
        </authorList>
    </citation>
    <scope>GENOME REANNOTATION</scope>
    <source>
        <strain>cv. Columbia</strain>
    </source>
</reference>
<reference key="4">
    <citation type="journal article" date="2003" name="Science">
        <title>Empirical analysis of transcriptional activity in the Arabidopsis genome.</title>
        <authorList>
            <person name="Yamada K."/>
            <person name="Lim J."/>
            <person name="Dale J.M."/>
            <person name="Chen H."/>
            <person name="Shinn P."/>
            <person name="Palm C.J."/>
            <person name="Southwick A.M."/>
            <person name="Wu H.C."/>
            <person name="Kim C.J."/>
            <person name="Nguyen M."/>
            <person name="Pham P.K."/>
            <person name="Cheuk R.F."/>
            <person name="Karlin-Newmann G."/>
            <person name="Liu S.X."/>
            <person name="Lam B."/>
            <person name="Sakano H."/>
            <person name="Wu T."/>
            <person name="Yu G."/>
            <person name="Miranda M."/>
            <person name="Quach H.L."/>
            <person name="Tripp M."/>
            <person name="Chang C.H."/>
            <person name="Lee J.M."/>
            <person name="Toriumi M.J."/>
            <person name="Chan M.M."/>
            <person name="Tang C.C."/>
            <person name="Onodera C.S."/>
            <person name="Deng J.M."/>
            <person name="Akiyama K."/>
            <person name="Ansari Y."/>
            <person name="Arakawa T."/>
            <person name="Banh J."/>
            <person name="Banno F."/>
            <person name="Bowser L."/>
            <person name="Brooks S.Y."/>
            <person name="Carninci P."/>
            <person name="Chao Q."/>
            <person name="Choy N."/>
            <person name="Enju A."/>
            <person name="Goldsmith A.D."/>
            <person name="Gurjal M."/>
            <person name="Hansen N.F."/>
            <person name="Hayashizaki Y."/>
            <person name="Johnson-Hopson C."/>
            <person name="Hsuan V.W."/>
            <person name="Iida K."/>
            <person name="Karnes M."/>
            <person name="Khan S."/>
            <person name="Koesema E."/>
            <person name="Ishida J."/>
            <person name="Jiang P.X."/>
            <person name="Jones T."/>
            <person name="Kawai J."/>
            <person name="Kamiya A."/>
            <person name="Meyers C."/>
            <person name="Nakajima M."/>
            <person name="Narusaka M."/>
            <person name="Seki M."/>
            <person name="Sakurai T."/>
            <person name="Satou M."/>
            <person name="Tamse R."/>
            <person name="Vaysberg M."/>
            <person name="Wallender E.K."/>
            <person name="Wong C."/>
            <person name="Yamamura Y."/>
            <person name="Yuan S."/>
            <person name="Shinozaki K."/>
            <person name="Davis R.W."/>
            <person name="Theologis A."/>
            <person name="Ecker J.R."/>
        </authorList>
    </citation>
    <scope>NUCLEOTIDE SEQUENCE [LARGE SCALE MRNA]</scope>
    <source>
        <strain>cv. Columbia</strain>
    </source>
</reference>
<name>P5CS2_ARATH</name>
<proteinExistence type="evidence at protein level"/>
<comment type="function">
    <text>P5CS plays a key role in proline biosynthesis, leading to osmoregulation in plants.</text>
</comment>
<comment type="catalytic activity">
    <reaction>
        <text>L-glutamate + ATP = L-glutamyl 5-phosphate + ADP</text>
        <dbReference type="Rhea" id="RHEA:14877"/>
        <dbReference type="ChEBI" id="CHEBI:29985"/>
        <dbReference type="ChEBI" id="CHEBI:30616"/>
        <dbReference type="ChEBI" id="CHEBI:58274"/>
        <dbReference type="ChEBI" id="CHEBI:456216"/>
        <dbReference type="EC" id="2.7.2.11"/>
    </reaction>
</comment>
<comment type="catalytic activity">
    <reaction>
        <text>L-glutamate 5-semialdehyde + phosphate + NADP(+) = L-glutamyl 5-phosphate + NADPH + H(+)</text>
        <dbReference type="Rhea" id="RHEA:19541"/>
        <dbReference type="ChEBI" id="CHEBI:15378"/>
        <dbReference type="ChEBI" id="CHEBI:43474"/>
        <dbReference type="ChEBI" id="CHEBI:57783"/>
        <dbReference type="ChEBI" id="CHEBI:58066"/>
        <dbReference type="ChEBI" id="CHEBI:58274"/>
        <dbReference type="ChEBI" id="CHEBI:58349"/>
        <dbReference type="EC" id="1.2.1.41"/>
    </reaction>
</comment>
<comment type="pathway">
    <text>Amino-acid biosynthesis; L-proline biosynthesis; L-glutamate 5-semialdehyde from L-glutamate: step 1/2.</text>
</comment>
<comment type="pathway">
    <text>Amino-acid biosynthesis; L-proline biosynthesis; L-glutamate 5-semialdehyde from L-glutamate: step 2/2.</text>
</comment>
<comment type="alternative products">
    <event type="alternative splicing"/>
    <isoform>
        <id>P54888-1</id>
        <name>1</name>
        <sequence type="displayed"/>
    </isoform>
    <text>A number of isoforms are produced. According to EST sequences.</text>
</comment>
<comment type="similarity">
    <text evidence="2">In the N-terminal section; belongs to the glutamate 5-kinase family.</text>
</comment>
<comment type="similarity">
    <text evidence="2">In the C-terminal section; belongs to the gamma-glutamyl phosphate reductase family.</text>
</comment>
<comment type="sequence caution" evidence="2">
    <conflict type="erroneous gene model prediction">
        <sequence resource="EMBL-CDS" id="CAB81586"/>
    </conflict>
</comment>
<organism>
    <name type="scientific">Arabidopsis thaliana</name>
    <name type="common">Mouse-ear cress</name>
    <dbReference type="NCBI Taxonomy" id="3702"/>
    <lineage>
        <taxon>Eukaryota</taxon>
        <taxon>Viridiplantae</taxon>
        <taxon>Streptophyta</taxon>
        <taxon>Embryophyta</taxon>
        <taxon>Tracheophyta</taxon>
        <taxon>Spermatophyta</taxon>
        <taxon>Magnoliopsida</taxon>
        <taxon>eudicotyledons</taxon>
        <taxon>Gunneridae</taxon>
        <taxon>Pentapetalae</taxon>
        <taxon>rosids</taxon>
        <taxon>malvids</taxon>
        <taxon>Brassicales</taxon>
        <taxon>Brassicaceae</taxon>
        <taxon>Camelineae</taxon>
        <taxon>Arabidopsis</taxon>
    </lineage>
</organism>
<gene>
    <name type="primary">P5CSB</name>
    <name type="synonym">P5CS2</name>
    <name type="ordered locus">At3g55610</name>
    <name type="ORF">F1I16_20</name>
</gene>
<keyword id="KW-0002">3D-structure</keyword>
<keyword id="KW-0025">Alternative splicing</keyword>
<keyword id="KW-0028">Amino-acid biosynthesis</keyword>
<keyword id="KW-0067">ATP-binding</keyword>
<keyword id="KW-0418">Kinase</keyword>
<keyword id="KW-0511">Multifunctional enzyme</keyword>
<keyword id="KW-0521">NADP</keyword>
<keyword id="KW-0547">Nucleotide-binding</keyword>
<keyword id="KW-0560">Oxidoreductase</keyword>
<keyword id="KW-0641">Proline biosynthesis</keyword>
<keyword id="KW-1185">Reference proteome</keyword>
<keyword id="KW-0808">Transferase</keyword>
<protein>
    <recommendedName>
        <fullName>Delta-1-pyrroline-5-carboxylate synthase B</fullName>
        <shortName>P5CS B</shortName>
    </recommendedName>
    <domain>
        <recommendedName>
            <fullName>Glutamate 5-kinase</fullName>
            <shortName>GK</shortName>
            <ecNumber>2.7.2.11</ecNumber>
        </recommendedName>
        <alternativeName>
            <fullName>Gamma-glutamyl kinase</fullName>
        </alternativeName>
    </domain>
    <domain>
        <recommendedName>
            <fullName>Gamma-glutamyl phosphate reductase</fullName>
            <shortName>GPR</shortName>
            <ecNumber>1.2.1.41</ecNumber>
        </recommendedName>
        <alternativeName>
            <fullName>Glutamate-5-semialdehyde dehydrogenase</fullName>
        </alternativeName>
        <alternativeName>
            <fullName>Glutamyl-gamma-semialdehyde dehydrogenase</fullName>
        </alternativeName>
    </domain>
</protein>
<dbReference type="EC" id="2.7.2.11"/>
<dbReference type="EC" id="1.2.1.41"/>
<dbReference type="EMBL" id="X86778">
    <property type="protein sequence ID" value="CAA60447.1"/>
    <property type="molecule type" value="Genomic_DNA"/>
</dbReference>
<dbReference type="EMBL" id="Y09355">
    <property type="protein sequence ID" value="CAA70527.1"/>
    <property type="molecule type" value="mRNA"/>
</dbReference>
<dbReference type="EMBL" id="AL161667">
    <property type="protein sequence ID" value="CAB81586.1"/>
    <property type="status" value="ALT_SEQ"/>
    <property type="molecule type" value="Genomic_DNA"/>
</dbReference>
<dbReference type="EMBL" id="CP002686">
    <property type="protein sequence ID" value="AEE79408.1"/>
    <property type="molecule type" value="Genomic_DNA"/>
</dbReference>
<dbReference type="EMBL" id="AY091766">
    <property type="protein sequence ID" value="AAM10314.1"/>
    <property type="molecule type" value="mRNA"/>
</dbReference>
<dbReference type="PIR" id="T47700">
    <property type="entry name" value="T47700"/>
</dbReference>
<dbReference type="PIR" id="T50682">
    <property type="entry name" value="T50684"/>
</dbReference>
<dbReference type="RefSeq" id="NP_191120.2">
    <molecule id="P54888-1"/>
    <property type="nucleotide sequence ID" value="NM_115419.5"/>
</dbReference>
<dbReference type="PDB" id="8J0E">
    <property type="method" value="EM"/>
    <property type="resolution" value="3.40 A"/>
    <property type="chains" value="A/B/E/F=1-726"/>
</dbReference>
<dbReference type="PDB" id="8J0F">
    <property type="method" value="EM"/>
    <property type="resolution" value="3.30 A"/>
    <property type="chains" value="A/B/C/D/E/F/G/H=1-726"/>
</dbReference>
<dbReference type="PDB" id="8J0G">
    <property type="method" value="EM"/>
    <property type="resolution" value="3.70 A"/>
    <property type="chains" value="A/B/E/F=1-726"/>
</dbReference>
<dbReference type="PDB" id="8J27">
    <property type="method" value="EM"/>
    <property type="resolution" value="3.60 A"/>
    <property type="chains" value="A/B/E/F=1-726"/>
</dbReference>
<dbReference type="PDB" id="8J28">
    <property type="method" value="EM"/>
    <property type="resolution" value="3.70 A"/>
    <property type="chains" value="A/C/E/F=1-726"/>
</dbReference>
<dbReference type="PDBsum" id="8J0E"/>
<dbReference type="PDBsum" id="8J0F"/>
<dbReference type="PDBsum" id="8J0G"/>
<dbReference type="PDBsum" id="8J27"/>
<dbReference type="PDBsum" id="8J28"/>
<dbReference type="EMDB" id="EMD-35900"/>
<dbReference type="EMDB" id="EMD-35901"/>
<dbReference type="EMDB" id="EMD-35902"/>
<dbReference type="EMDB" id="EMD-35946"/>
<dbReference type="EMDB" id="EMD-35947"/>
<dbReference type="SMR" id="P54888"/>
<dbReference type="BioGRID" id="10043">
    <property type="interactions" value="4"/>
</dbReference>
<dbReference type="FunCoup" id="P54888">
    <property type="interactions" value="2194"/>
</dbReference>
<dbReference type="IntAct" id="P54888">
    <property type="interactions" value="3"/>
</dbReference>
<dbReference type="STRING" id="3702.P54888"/>
<dbReference type="iPTMnet" id="P54888"/>
<dbReference type="MetOSite" id="P54888"/>
<dbReference type="PaxDb" id="3702-AT3G55610.1"/>
<dbReference type="ProteomicsDB" id="236352">
    <molecule id="P54888-1"/>
</dbReference>
<dbReference type="EnsemblPlants" id="AT3G55610.1">
    <molecule id="P54888-1"/>
    <property type="protein sequence ID" value="AT3G55610.1"/>
    <property type="gene ID" value="AT3G55610"/>
</dbReference>
<dbReference type="GeneID" id="824727"/>
<dbReference type="Gramene" id="AT3G55610.1">
    <molecule id="P54888-1"/>
    <property type="protein sequence ID" value="AT3G55610.1"/>
    <property type="gene ID" value="AT3G55610"/>
</dbReference>
<dbReference type="KEGG" id="ath:AT3G55610"/>
<dbReference type="Araport" id="AT3G55610"/>
<dbReference type="TAIR" id="AT3G55610">
    <property type="gene designation" value="P5CS2"/>
</dbReference>
<dbReference type="eggNOG" id="KOG1154">
    <property type="taxonomic scope" value="Eukaryota"/>
</dbReference>
<dbReference type="eggNOG" id="KOG4165">
    <property type="taxonomic scope" value="Eukaryota"/>
</dbReference>
<dbReference type="HOGENOM" id="CLU_016144_0_0_1"/>
<dbReference type="InParanoid" id="P54888"/>
<dbReference type="OrthoDB" id="1934954at2759"/>
<dbReference type="PhylomeDB" id="P54888"/>
<dbReference type="BioCyc" id="ARA:AT3G55610-MONOMER"/>
<dbReference type="UniPathway" id="UPA00098">
    <property type="reaction ID" value="UER00359"/>
</dbReference>
<dbReference type="UniPathway" id="UPA00098">
    <property type="reaction ID" value="UER00360"/>
</dbReference>
<dbReference type="PRO" id="PR:P54888"/>
<dbReference type="Proteomes" id="UP000006548">
    <property type="component" value="Chromosome 3"/>
</dbReference>
<dbReference type="ExpressionAtlas" id="P54888">
    <property type="expression patterns" value="baseline and differential"/>
</dbReference>
<dbReference type="GO" id="GO:0009507">
    <property type="term" value="C:chloroplast"/>
    <property type="evidence" value="ECO:0000314"/>
    <property type="project" value="TAIR"/>
</dbReference>
<dbReference type="GO" id="GO:0005737">
    <property type="term" value="C:cytoplasm"/>
    <property type="evidence" value="ECO:0000314"/>
    <property type="project" value="TAIR"/>
</dbReference>
<dbReference type="GO" id="GO:0009506">
    <property type="term" value="C:plasmodesma"/>
    <property type="evidence" value="ECO:0007005"/>
    <property type="project" value="TAIR"/>
</dbReference>
<dbReference type="GO" id="GO:0005524">
    <property type="term" value="F:ATP binding"/>
    <property type="evidence" value="ECO:0007669"/>
    <property type="project" value="UniProtKB-KW"/>
</dbReference>
<dbReference type="GO" id="GO:0004349">
    <property type="term" value="F:glutamate 5-kinase activity"/>
    <property type="evidence" value="ECO:0007669"/>
    <property type="project" value="UniProtKB-EC"/>
</dbReference>
<dbReference type="GO" id="GO:0004350">
    <property type="term" value="F:glutamate-5-semialdehyde dehydrogenase activity"/>
    <property type="evidence" value="ECO:0007669"/>
    <property type="project" value="UniProtKB-EC"/>
</dbReference>
<dbReference type="GO" id="GO:0009793">
    <property type="term" value="P:embryo development ending in seed dormancy"/>
    <property type="evidence" value="ECO:0000315"/>
    <property type="project" value="TAIR"/>
</dbReference>
<dbReference type="GO" id="GO:0055129">
    <property type="term" value="P:L-proline biosynthetic process"/>
    <property type="evidence" value="ECO:0007669"/>
    <property type="project" value="UniProtKB-UniPathway"/>
</dbReference>
<dbReference type="GO" id="GO:0009555">
    <property type="term" value="P:pollen development"/>
    <property type="evidence" value="ECO:0000315"/>
    <property type="project" value="TAIR"/>
</dbReference>
<dbReference type="GO" id="GO:0006561">
    <property type="term" value="P:proline biosynthetic process"/>
    <property type="evidence" value="ECO:0000315"/>
    <property type="project" value="TAIR"/>
</dbReference>
<dbReference type="CDD" id="cd04256">
    <property type="entry name" value="AAK_P5CS_ProBA"/>
    <property type="match status" value="1"/>
</dbReference>
<dbReference type="CDD" id="cd07079">
    <property type="entry name" value="ALDH_F18-19_ProA-GPR"/>
    <property type="match status" value="1"/>
</dbReference>
<dbReference type="FunFam" id="3.40.1160.10:FF:000013">
    <property type="entry name" value="Delta-1-pyrroline-5-carboxylate synthase"/>
    <property type="match status" value="1"/>
</dbReference>
<dbReference type="FunFam" id="3.40.309.10:FF:000015">
    <property type="entry name" value="Delta-1-pyrroline-5-carboxylate synthase"/>
    <property type="match status" value="1"/>
</dbReference>
<dbReference type="Gene3D" id="3.40.1160.10">
    <property type="entry name" value="Acetylglutamate kinase-like"/>
    <property type="match status" value="1"/>
</dbReference>
<dbReference type="Gene3D" id="3.40.605.10">
    <property type="entry name" value="Aldehyde Dehydrogenase, Chain A, domain 1"/>
    <property type="match status" value="1"/>
</dbReference>
<dbReference type="Gene3D" id="3.40.309.10">
    <property type="entry name" value="Aldehyde Dehydrogenase, Chain A, domain 2"/>
    <property type="match status" value="1"/>
</dbReference>
<dbReference type="HAMAP" id="MF_00412">
    <property type="entry name" value="ProA"/>
    <property type="match status" value="1"/>
</dbReference>
<dbReference type="HAMAP" id="MF_00456">
    <property type="entry name" value="ProB"/>
    <property type="match status" value="1"/>
</dbReference>
<dbReference type="InterPro" id="IPR036393">
    <property type="entry name" value="AceGlu_kinase-like_sf"/>
</dbReference>
<dbReference type="InterPro" id="IPR016161">
    <property type="entry name" value="Ald_DH/histidinol_DH"/>
</dbReference>
<dbReference type="InterPro" id="IPR016163">
    <property type="entry name" value="Ald_DH_C"/>
</dbReference>
<dbReference type="InterPro" id="IPR016162">
    <property type="entry name" value="Ald_DH_N"/>
</dbReference>
<dbReference type="InterPro" id="IPR015590">
    <property type="entry name" value="Aldehyde_DH_dom"/>
</dbReference>
<dbReference type="InterPro" id="IPR001048">
    <property type="entry name" value="Asp/Glu/Uridylate_kinase"/>
</dbReference>
<dbReference type="InterPro" id="IPR020593">
    <property type="entry name" value="G-glutamylP_reductase_CS"/>
</dbReference>
<dbReference type="InterPro" id="IPR041744">
    <property type="entry name" value="G5K_ProBA"/>
</dbReference>
<dbReference type="InterPro" id="IPR001057">
    <property type="entry name" value="Glu/AcGlu_kinase"/>
</dbReference>
<dbReference type="InterPro" id="IPR005715">
    <property type="entry name" value="Glu_5kinase/COase_Synthase"/>
</dbReference>
<dbReference type="InterPro" id="IPR019797">
    <property type="entry name" value="Glutamate_5-kinase_CS"/>
</dbReference>
<dbReference type="InterPro" id="IPR000965">
    <property type="entry name" value="GPR_dom"/>
</dbReference>
<dbReference type="InterPro" id="IPR005766">
    <property type="entry name" value="P5_carboxy_syn"/>
</dbReference>
<dbReference type="NCBIfam" id="TIGR01092">
    <property type="entry name" value="P5CS"/>
    <property type="match status" value="1"/>
</dbReference>
<dbReference type="NCBIfam" id="NF001221">
    <property type="entry name" value="PRK00197.1"/>
    <property type="match status" value="1"/>
</dbReference>
<dbReference type="NCBIfam" id="TIGR00407">
    <property type="entry name" value="proA"/>
    <property type="match status" value="1"/>
</dbReference>
<dbReference type="NCBIfam" id="TIGR01027">
    <property type="entry name" value="proB"/>
    <property type="match status" value="1"/>
</dbReference>
<dbReference type="PANTHER" id="PTHR11063:SF8">
    <property type="entry name" value="DELTA-1-PYRROLINE-5-CARBOXYLATE SYNTHASE"/>
    <property type="match status" value="1"/>
</dbReference>
<dbReference type="PANTHER" id="PTHR11063">
    <property type="entry name" value="GLUTAMATE SEMIALDEHYDE DEHYDROGENASE"/>
    <property type="match status" value="1"/>
</dbReference>
<dbReference type="Pfam" id="PF00696">
    <property type="entry name" value="AA_kinase"/>
    <property type="match status" value="1"/>
</dbReference>
<dbReference type="Pfam" id="PF00171">
    <property type="entry name" value="Aldedh"/>
    <property type="match status" value="1"/>
</dbReference>
<dbReference type="PIRSF" id="PIRSF036429">
    <property type="entry name" value="P5C_syn"/>
    <property type="match status" value="1"/>
</dbReference>
<dbReference type="PRINTS" id="PR00474">
    <property type="entry name" value="GLU5KINASE"/>
</dbReference>
<dbReference type="SUPFAM" id="SSF53720">
    <property type="entry name" value="ALDH-like"/>
    <property type="match status" value="1"/>
</dbReference>
<dbReference type="SUPFAM" id="SSF53633">
    <property type="entry name" value="Carbamate kinase-like"/>
    <property type="match status" value="1"/>
</dbReference>
<dbReference type="PROSITE" id="PS00902">
    <property type="entry name" value="GLUTAMATE_5_KINASE"/>
    <property type="match status" value="1"/>
</dbReference>
<dbReference type="PROSITE" id="PS01223">
    <property type="entry name" value="PROA"/>
    <property type="match status" value="1"/>
</dbReference>
<accession>P54888</accession>
<accession>Q9M061</accession>
<sequence length="726" mass="78871">MTEIDRSRAFAKDVKRIVVKVGTAVVTGKGGRLALGRLGAICEQLAELNSDGFEVILVSSGAVGLGRQRLRYRQLVNSSFADLQKPQMELDGKACAGVGQSSLMAYYETMFDQLDVTVAQMLVTDSSFRDKDFRKQLSETVKAMLRMRVIPVFNENDAISTRRAPYKDSTGIFWDNDSLAALLSLELKADLLILLSDVEGLYTGPPSDSTSKLIHTFIKEKHQDEITFGEKSKLGRGGMTAKVKAAVNAAYGGVPVIITSGYAAENISKVLRGLRVGTLFHQDAHLWAPVVDTTSRDMAVAARESSRKLQALSSEDRKQILHDIANALEVNEKTIKAENDLDVAAAQEAGYEESLVARLVMKPGKISSLAASVRQLAEMEDPIGRVLKKTQVADDLILEKTSSPIGVLLIVFESRPDALVQIASLAIRSGNGLLLKGGKEARRSNAILHKVITDAIPETVGGKLIGLVTSREEIPDLLKLDDVIDLVIPRGSNKLVSQIKNSTKIPVLGHADGICHVYVDKSGKLDMAKRIVSDAKLDYPAACNAMETLLVHKDLEQNGFLDDLIYVLQTKGVTLYGGPRASAKLNIPETKSFHHEYSSKACTVEIVEDVYGAIDHIHQHGSAHTDCIVTEDSEVAEIFLRQVDSAAVFHNASTRFSDGFRFGLGAEVGISTSRIHARGPVGVEGLLTTRWIMRGKGQVVDGDNGIVYTHKDLPVLQRTEAVENGI</sequence>